<gene>
    <name type="primary">lolC</name>
    <name type="ordered locus">HI_1555</name>
</gene>
<keyword id="KW-0997">Cell inner membrane</keyword>
<keyword id="KW-1003">Cell membrane</keyword>
<keyword id="KW-0472">Membrane</keyword>
<keyword id="KW-1185">Reference proteome</keyword>
<keyword id="KW-0812">Transmembrane</keyword>
<keyword id="KW-1133">Transmembrane helix</keyword>
<keyword id="KW-0813">Transport</keyword>
<comment type="function">
    <text evidence="1">Part of an ATP-dependent transport system LolCDE responsible for the release of lipoproteins targeted to the outer membrane from the inner membrane. Such a release is dependent of the sorting-signal (absence of an Asp at position 2 of the mature lipoprotein) and of LolA (By similarity).</text>
</comment>
<comment type="subcellular location">
    <subcellularLocation>
        <location evidence="1">Cell inner membrane</location>
        <topology evidence="1">Multi-pass membrane protein</topology>
    </subcellularLocation>
</comment>
<comment type="similarity">
    <text evidence="3">Belongs to the ABC-4 integral membrane protein family. LolC/E subfamily.</text>
</comment>
<reference key="1">
    <citation type="journal article" date="1995" name="Science">
        <title>Whole-genome random sequencing and assembly of Haemophilus influenzae Rd.</title>
        <authorList>
            <person name="Fleischmann R.D."/>
            <person name="Adams M.D."/>
            <person name="White O."/>
            <person name="Clayton R.A."/>
            <person name="Kirkness E.F."/>
            <person name="Kerlavage A.R."/>
            <person name="Bult C.J."/>
            <person name="Tomb J.-F."/>
            <person name="Dougherty B.A."/>
            <person name="Merrick J.M."/>
            <person name="McKenney K."/>
            <person name="Sutton G.G."/>
            <person name="FitzHugh W."/>
            <person name="Fields C.A."/>
            <person name="Gocayne J.D."/>
            <person name="Scott J.D."/>
            <person name="Shirley R."/>
            <person name="Liu L.-I."/>
            <person name="Glodek A."/>
            <person name="Kelley J.M."/>
            <person name="Weidman J.F."/>
            <person name="Phillips C.A."/>
            <person name="Spriggs T."/>
            <person name="Hedblom E."/>
            <person name="Cotton M.D."/>
            <person name="Utterback T.R."/>
            <person name="Hanna M.C."/>
            <person name="Nguyen D.T."/>
            <person name="Saudek D.M."/>
            <person name="Brandon R.C."/>
            <person name="Fine L.D."/>
            <person name="Fritchman J.L."/>
            <person name="Fuhrmann J.L."/>
            <person name="Geoghagen N.S.M."/>
            <person name="Gnehm C.L."/>
            <person name="McDonald L.A."/>
            <person name="Small K.V."/>
            <person name="Fraser C.M."/>
            <person name="Smith H.O."/>
            <person name="Venter J.C."/>
        </authorList>
    </citation>
    <scope>NUCLEOTIDE SEQUENCE [LARGE SCALE GENOMIC DNA]</scope>
    <source>
        <strain>ATCC 51907 / DSM 11121 / KW20 / Rd</strain>
    </source>
</reference>
<dbReference type="EMBL" id="L42023">
    <property type="protein sequence ID" value="AAC23204.1"/>
    <property type="molecule type" value="Genomic_DNA"/>
</dbReference>
<dbReference type="PIR" id="A64036">
    <property type="entry name" value="A64036"/>
</dbReference>
<dbReference type="RefSeq" id="NP_439704.1">
    <property type="nucleotide sequence ID" value="NC_000907.1"/>
</dbReference>
<dbReference type="SMR" id="P44252"/>
<dbReference type="STRING" id="71421.HI_1555"/>
<dbReference type="EnsemblBacteria" id="AAC23204">
    <property type="protein sequence ID" value="AAC23204"/>
    <property type="gene ID" value="HI_1555"/>
</dbReference>
<dbReference type="KEGG" id="hin:HI_1555"/>
<dbReference type="PATRIC" id="fig|71421.8.peg.1626"/>
<dbReference type="eggNOG" id="COG4591">
    <property type="taxonomic scope" value="Bacteria"/>
</dbReference>
<dbReference type="HOGENOM" id="CLU_000604_8_1_6"/>
<dbReference type="OrthoDB" id="9808461at2"/>
<dbReference type="PhylomeDB" id="P44252"/>
<dbReference type="BioCyc" id="HINF71421:G1GJ1-1575-MONOMER"/>
<dbReference type="Proteomes" id="UP000000579">
    <property type="component" value="Chromosome"/>
</dbReference>
<dbReference type="GO" id="GO:0098797">
    <property type="term" value="C:plasma membrane protein complex"/>
    <property type="evidence" value="ECO:0000318"/>
    <property type="project" value="GO_Central"/>
</dbReference>
<dbReference type="GO" id="GO:0044874">
    <property type="term" value="P:lipoprotein localization to outer membrane"/>
    <property type="evidence" value="ECO:0000318"/>
    <property type="project" value="GO_Central"/>
</dbReference>
<dbReference type="GO" id="GO:0042953">
    <property type="term" value="P:lipoprotein transport"/>
    <property type="evidence" value="ECO:0007669"/>
    <property type="project" value="InterPro"/>
</dbReference>
<dbReference type="InterPro" id="IPR003838">
    <property type="entry name" value="ABC3_permease_C"/>
</dbReference>
<dbReference type="InterPro" id="IPR051447">
    <property type="entry name" value="Lipoprotein-release_system"/>
</dbReference>
<dbReference type="InterPro" id="IPR011925">
    <property type="entry name" value="LolCE_TM"/>
</dbReference>
<dbReference type="InterPro" id="IPR025857">
    <property type="entry name" value="MacB_PCD"/>
</dbReference>
<dbReference type="NCBIfam" id="TIGR02212">
    <property type="entry name" value="lolCE"/>
    <property type="match status" value="1"/>
</dbReference>
<dbReference type="PANTHER" id="PTHR30489:SF8">
    <property type="entry name" value="LIPOPROTEIN-RELEASING SYSTEM TRANSMEMBRANE PROTEIN LOLC"/>
    <property type="match status" value="1"/>
</dbReference>
<dbReference type="PANTHER" id="PTHR30489">
    <property type="entry name" value="LIPOPROTEIN-RELEASING SYSTEM TRANSMEMBRANE PROTEIN LOLE"/>
    <property type="match status" value="1"/>
</dbReference>
<dbReference type="Pfam" id="PF02687">
    <property type="entry name" value="FtsX"/>
    <property type="match status" value="1"/>
</dbReference>
<dbReference type="Pfam" id="PF12704">
    <property type="entry name" value="MacB_PCD"/>
    <property type="match status" value="1"/>
</dbReference>
<name>LOLC_HAEIN</name>
<protein>
    <recommendedName>
        <fullName>Lipoprotein-releasing system transmembrane protein LolC</fullName>
    </recommendedName>
</protein>
<proteinExistence type="inferred from homology"/>
<organism>
    <name type="scientific">Haemophilus influenzae (strain ATCC 51907 / DSM 11121 / KW20 / Rd)</name>
    <dbReference type="NCBI Taxonomy" id="71421"/>
    <lineage>
        <taxon>Bacteria</taxon>
        <taxon>Pseudomonadati</taxon>
        <taxon>Pseudomonadota</taxon>
        <taxon>Gammaproteobacteria</taxon>
        <taxon>Pasteurellales</taxon>
        <taxon>Pasteurellaceae</taxon>
        <taxon>Haemophilus</taxon>
    </lineage>
</organism>
<feature type="chain" id="PRO_0000201813" description="Lipoprotein-releasing system transmembrane protein LolC">
    <location>
        <begin position="1"/>
        <end position="393"/>
    </location>
</feature>
<feature type="transmembrane region" description="Helical" evidence="2">
    <location>
        <begin position="25"/>
        <end position="45"/>
    </location>
</feature>
<feature type="transmembrane region" description="Helical" evidence="2">
    <location>
        <begin position="262"/>
        <end position="282"/>
    </location>
</feature>
<feature type="transmembrane region" description="Helical" evidence="2">
    <location>
        <begin position="314"/>
        <end position="334"/>
    </location>
</feature>
<feature type="transmembrane region" description="Helical" evidence="2">
    <location>
        <begin position="356"/>
        <end position="376"/>
    </location>
</feature>
<sequence length="393" mass="43579">MNFPISLYIALRYWRAKSADRFGRLVTNLASLGIVLGVMALIIVLSVMNGLEGYQKQQVLSSIPHAIVSEEQPISTEKTLENLPHFVQKAVPINTTNVIYQTAKGVSAGQIIGIQSFSDDPLVESFDQTKFNEILPRGEFKLVIGDQLAQKLGVNIGDKIRLMITENSQYTPFGRVPMQRLFTVSDIYYGYGEASGYEAFANITDIGRLMRIQPQQAQGYRLFLNDPFQITELPQHFPTQKITDWRVQKGEFFQAVRMEKNMMGLLISLIIVVAISNIVTSLSLMVVDKQGEIAILQTQGLTKSQVRSVFIYQGLLVGFVGTLLGAILGVLATLNLTDIVSAVNPQGVFLPTELSFVQMIFVIGFSLLLSLLSTLYPAYRAAKVEPAAALRYE</sequence>
<evidence type="ECO:0000250" key="1"/>
<evidence type="ECO:0000255" key="2"/>
<evidence type="ECO:0000305" key="3"/>
<accession>P44252</accession>